<organism>
    <name type="scientific">Clostridium botulinum (strain Kyoto / Type A2)</name>
    <dbReference type="NCBI Taxonomy" id="536232"/>
    <lineage>
        <taxon>Bacteria</taxon>
        <taxon>Bacillati</taxon>
        <taxon>Bacillota</taxon>
        <taxon>Clostridia</taxon>
        <taxon>Eubacteriales</taxon>
        <taxon>Clostridiaceae</taxon>
        <taxon>Clostridium</taxon>
    </lineage>
</organism>
<reference key="1">
    <citation type="submission" date="2008-10" db="EMBL/GenBank/DDBJ databases">
        <title>Genome sequence of Clostridium botulinum A2 Kyoto.</title>
        <authorList>
            <person name="Shrivastava S."/>
            <person name="Brinkac L.M."/>
            <person name="Brown J.L."/>
            <person name="Bruce D."/>
            <person name="Detter C.C."/>
            <person name="Johnson E.A."/>
            <person name="Munk C.A."/>
            <person name="Smith L.A."/>
            <person name="Smith T.J."/>
            <person name="Sutton G."/>
            <person name="Brettin T.S."/>
        </authorList>
    </citation>
    <scope>NUCLEOTIDE SEQUENCE [LARGE SCALE GENOMIC DNA]</scope>
    <source>
        <strain>Kyoto / Type A2</strain>
    </source>
</reference>
<feature type="chain" id="PRO_1000132904" description="Glutaminase">
    <location>
        <begin position="1"/>
        <end position="305"/>
    </location>
</feature>
<feature type="binding site" evidence="1">
    <location>
        <position position="61"/>
    </location>
    <ligand>
        <name>substrate</name>
    </ligand>
</feature>
<feature type="binding site" evidence="1">
    <location>
        <position position="113"/>
    </location>
    <ligand>
        <name>substrate</name>
    </ligand>
</feature>
<feature type="binding site" evidence="1">
    <location>
        <position position="158"/>
    </location>
    <ligand>
        <name>substrate</name>
    </ligand>
</feature>
<feature type="binding site" evidence="1">
    <location>
        <position position="165"/>
    </location>
    <ligand>
        <name>substrate</name>
    </ligand>
</feature>
<feature type="binding site" evidence="1">
    <location>
        <position position="189"/>
    </location>
    <ligand>
        <name>substrate</name>
    </ligand>
</feature>
<feature type="binding site" evidence="1">
    <location>
        <position position="241"/>
    </location>
    <ligand>
        <name>substrate</name>
    </ligand>
</feature>
<feature type="binding site" evidence="1">
    <location>
        <position position="259"/>
    </location>
    <ligand>
        <name>substrate</name>
    </ligand>
</feature>
<protein>
    <recommendedName>
        <fullName evidence="1">Glutaminase</fullName>
        <ecNumber evidence="1">3.5.1.2</ecNumber>
    </recommendedName>
</protein>
<sequence length="305" mass="33271">MNRLLKTIIENNRKWISEGKVASYIPELSKMDKNLLGISVCTLGGEEYWEGDAEVKFTIQSISKIVTLMLAIIDNGEDYVFSKVGMEPTETAFNSIVNLEAKESHKPINPMINAGAIVVASMVAGKDSDEKFDRILKFTRKISGNNNIDINLNVYKSEKETGHRNRALAYFMKSTGALKGNVEEILDVYFKQCSIEITCKDLARIGVMLANDGVSPYTGDRIVPRHVARIVKTIMVTCGMYDASGNFAVHIGIPAKSGVGGGIVACAPRRMGIGVLGTALDEKGNSIAGTKILEELSKQLDLSIF</sequence>
<keyword id="KW-0378">Hydrolase</keyword>
<name>GLSA_CLOBJ</name>
<proteinExistence type="inferred from homology"/>
<gene>
    <name evidence="1" type="primary">glsA</name>
    <name type="ordered locus">CLM_3173</name>
</gene>
<evidence type="ECO:0000255" key="1">
    <source>
        <dbReference type="HAMAP-Rule" id="MF_00313"/>
    </source>
</evidence>
<dbReference type="EC" id="3.5.1.2" evidence="1"/>
<dbReference type="EMBL" id="CP001581">
    <property type="protein sequence ID" value="ACO87045.1"/>
    <property type="molecule type" value="Genomic_DNA"/>
</dbReference>
<dbReference type="RefSeq" id="WP_003357868.1">
    <property type="nucleotide sequence ID" value="NC_012563.1"/>
</dbReference>
<dbReference type="SMR" id="C1FUY9"/>
<dbReference type="KEGG" id="cby:CLM_3173"/>
<dbReference type="eggNOG" id="COG2066">
    <property type="taxonomic scope" value="Bacteria"/>
</dbReference>
<dbReference type="HOGENOM" id="CLU_027932_1_0_9"/>
<dbReference type="Proteomes" id="UP000001374">
    <property type="component" value="Chromosome"/>
</dbReference>
<dbReference type="GO" id="GO:0004359">
    <property type="term" value="F:glutaminase activity"/>
    <property type="evidence" value="ECO:0007669"/>
    <property type="project" value="UniProtKB-UniRule"/>
</dbReference>
<dbReference type="GO" id="GO:0006537">
    <property type="term" value="P:glutamate biosynthetic process"/>
    <property type="evidence" value="ECO:0007669"/>
    <property type="project" value="TreeGrafter"/>
</dbReference>
<dbReference type="GO" id="GO:0006543">
    <property type="term" value="P:glutamine catabolic process"/>
    <property type="evidence" value="ECO:0007669"/>
    <property type="project" value="TreeGrafter"/>
</dbReference>
<dbReference type="FunFam" id="3.40.710.10:FF:000005">
    <property type="entry name" value="Glutaminase"/>
    <property type="match status" value="1"/>
</dbReference>
<dbReference type="Gene3D" id="3.40.710.10">
    <property type="entry name" value="DD-peptidase/beta-lactamase superfamily"/>
    <property type="match status" value="1"/>
</dbReference>
<dbReference type="HAMAP" id="MF_00313">
    <property type="entry name" value="Glutaminase"/>
    <property type="match status" value="1"/>
</dbReference>
<dbReference type="InterPro" id="IPR012338">
    <property type="entry name" value="Beta-lactam/transpept-like"/>
</dbReference>
<dbReference type="InterPro" id="IPR015868">
    <property type="entry name" value="Glutaminase"/>
</dbReference>
<dbReference type="NCBIfam" id="TIGR03814">
    <property type="entry name" value="Gln_ase"/>
    <property type="match status" value="1"/>
</dbReference>
<dbReference type="PANTHER" id="PTHR12544">
    <property type="entry name" value="GLUTAMINASE"/>
    <property type="match status" value="1"/>
</dbReference>
<dbReference type="PANTHER" id="PTHR12544:SF29">
    <property type="entry name" value="GLUTAMINASE"/>
    <property type="match status" value="1"/>
</dbReference>
<dbReference type="Pfam" id="PF04960">
    <property type="entry name" value="Glutaminase"/>
    <property type="match status" value="1"/>
</dbReference>
<dbReference type="SUPFAM" id="SSF56601">
    <property type="entry name" value="beta-lactamase/transpeptidase-like"/>
    <property type="match status" value="1"/>
</dbReference>
<accession>C1FUY9</accession>
<comment type="catalytic activity">
    <reaction evidence="1">
        <text>L-glutamine + H2O = L-glutamate + NH4(+)</text>
        <dbReference type="Rhea" id="RHEA:15889"/>
        <dbReference type="ChEBI" id="CHEBI:15377"/>
        <dbReference type="ChEBI" id="CHEBI:28938"/>
        <dbReference type="ChEBI" id="CHEBI:29985"/>
        <dbReference type="ChEBI" id="CHEBI:58359"/>
        <dbReference type="EC" id="3.5.1.2"/>
    </reaction>
</comment>
<comment type="subunit">
    <text evidence="1">Homotetramer.</text>
</comment>
<comment type="similarity">
    <text evidence="1">Belongs to the glutaminase family.</text>
</comment>